<keyword id="KW-0028">Amino-acid biosynthesis</keyword>
<keyword id="KW-0198">Cysteine biosynthesis</keyword>
<keyword id="KW-0249">Electron transport</keyword>
<keyword id="KW-0274">FAD</keyword>
<keyword id="KW-0285">Flavoprotein</keyword>
<keyword id="KW-0288">FMN</keyword>
<keyword id="KW-0521">NADP</keyword>
<keyword id="KW-0560">Oxidoreductase</keyword>
<keyword id="KW-1185">Reference proteome</keyword>
<keyword id="KW-0813">Transport</keyword>
<organism>
    <name type="scientific">Photorhabdus laumondii subsp. laumondii (strain DSM 15139 / CIP 105565 / TT01)</name>
    <name type="common">Photorhabdus luminescens subsp. laumondii</name>
    <dbReference type="NCBI Taxonomy" id="243265"/>
    <lineage>
        <taxon>Bacteria</taxon>
        <taxon>Pseudomonadati</taxon>
        <taxon>Pseudomonadota</taxon>
        <taxon>Gammaproteobacteria</taxon>
        <taxon>Enterobacterales</taxon>
        <taxon>Morganellaceae</taxon>
        <taxon>Photorhabdus</taxon>
    </lineage>
</organism>
<reference key="1">
    <citation type="journal article" date="2003" name="Nat. Biotechnol.">
        <title>The genome sequence of the entomopathogenic bacterium Photorhabdus luminescens.</title>
        <authorList>
            <person name="Duchaud E."/>
            <person name="Rusniok C."/>
            <person name="Frangeul L."/>
            <person name="Buchrieser C."/>
            <person name="Givaudan A."/>
            <person name="Taourit S."/>
            <person name="Bocs S."/>
            <person name="Boursaux-Eude C."/>
            <person name="Chandler M."/>
            <person name="Charles J.-F."/>
            <person name="Dassa E."/>
            <person name="Derose R."/>
            <person name="Derzelle S."/>
            <person name="Freyssinet G."/>
            <person name="Gaudriault S."/>
            <person name="Medigue C."/>
            <person name="Lanois A."/>
            <person name="Powell K."/>
            <person name="Siguier P."/>
            <person name="Vincent R."/>
            <person name="Wingate V."/>
            <person name="Zouine M."/>
            <person name="Glaser P."/>
            <person name="Boemare N."/>
            <person name="Danchin A."/>
            <person name="Kunst F."/>
        </authorList>
    </citation>
    <scope>NUCLEOTIDE SEQUENCE [LARGE SCALE GENOMIC DNA]</scope>
    <source>
        <strain>DSM 15139 / CIP 105565 / TT01</strain>
    </source>
</reference>
<comment type="function">
    <text evidence="1">Component of the sulfite reductase complex that catalyzes the 6-electron reduction of sulfite to sulfide. This is one of several activities required for the biosynthesis of L-cysteine from sulfate. The flavoprotein component catalyzes the electron flow from NADPH -&gt; FAD -&gt; FMN to the hemoprotein component.</text>
</comment>
<comment type="catalytic activity">
    <reaction evidence="1">
        <text>hydrogen sulfide + 3 NADP(+) + 3 H2O = sulfite + 3 NADPH + 4 H(+)</text>
        <dbReference type="Rhea" id="RHEA:13801"/>
        <dbReference type="ChEBI" id="CHEBI:15377"/>
        <dbReference type="ChEBI" id="CHEBI:15378"/>
        <dbReference type="ChEBI" id="CHEBI:17359"/>
        <dbReference type="ChEBI" id="CHEBI:29919"/>
        <dbReference type="ChEBI" id="CHEBI:57783"/>
        <dbReference type="ChEBI" id="CHEBI:58349"/>
        <dbReference type="EC" id="1.8.1.2"/>
    </reaction>
</comment>
<comment type="cofactor">
    <cofactor evidence="1">
        <name>FAD</name>
        <dbReference type="ChEBI" id="CHEBI:57692"/>
    </cofactor>
    <text evidence="1">Binds 1 FAD per subunit.</text>
</comment>
<comment type="cofactor">
    <cofactor evidence="1">
        <name>FMN</name>
        <dbReference type="ChEBI" id="CHEBI:58210"/>
    </cofactor>
    <text evidence="1">Binds 1 FMN per subunit.</text>
</comment>
<comment type="pathway">
    <text evidence="1">Sulfur metabolism; hydrogen sulfide biosynthesis; hydrogen sulfide from sulfite (NADPH route): step 1/1.</text>
</comment>
<comment type="subunit">
    <text evidence="1">Alpha(8)-beta(8). The alpha component is a flavoprotein, the beta component is a hemoprotein.</text>
</comment>
<comment type="similarity">
    <text evidence="1">Belongs to the NADPH-dependent sulphite reductase flavoprotein subunit CysJ family.</text>
</comment>
<comment type="similarity">
    <text evidence="1">In the N-terminal section; belongs to the flavodoxin family.</text>
</comment>
<comment type="similarity">
    <text evidence="1">In the C-terminal section; belongs to the flavoprotein pyridine nucleotide cytochrome reductase family.</text>
</comment>
<evidence type="ECO:0000255" key="1">
    <source>
        <dbReference type="HAMAP-Rule" id="MF_01541"/>
    </source>
</evidence>
<accession>Q7N8L6</accession>
<name>CYSJ_PHOLL</name>
<proteinExistence type="inferred from homology"/>
<sequence>MSIKPPSISLLPVSPEQLVRLQSEIGDFSPTQLAWLSGYFWGMVNQQPQVQAVVPAVPAQETITLISASQTGNARRLAEQLREDLLAQKLNVNLFNAGDYKFKQIAQEKILIIIASTQGEGEPAEEAVALYKYLYSKKVPKLNDTVFAVFGLGDTSYERFCQAGKDFDNRLNELGAQRLLERVDGDVEYQQVADQWRKQLTGILKQRIPTETGTEITSAQDRSVNEVFSTSYTKQAPLTAALATCQKITGRGSDKDVRHIEIDLGDSGLRYQPGDALGVWFENDPELVDEVLNLLWLQGTEQVEVNGQKLSLREALISHVELTQNTSVIVEKYAVLAKDEKLLSLIADKQALQQYAHNKPIADMIREAASQPEAQQFIDLLRPLTPRLYSISSSQAEMENEVHLTVGVVRYEIDGRARTGGASGYLADRLQENSDIRIFIEHNDNFRLPADPRTPVIMIGPGTGIAPFRAFMQQREADGAEGKNWLFFGNPHFTEDFLYQVEWQRYVKDGLLTRIDLAWSRDQQHKIYVQDKLREQGEAVWCWIKEGAHLYVCGDANRMAKDVEHALLDIIAEHGGMDTEQADEFLSELRFERRYQRDVY</sequence>
<feature type="chain" id="PRO_0000199930" description="Sulfite reductase [NADPH] flavoprotein alpha-component">
    <location>
        <begin position="1"/>
        <end position="600"/>
    </location>
</feature>
<feature type="domain" description="Flavodoxin-like" evidence="1">
    <location>
        <begin position="63"/>
        <end position="201"/>
    </location>
</feature>
<feature type="domain" description="FAD-binding FR-type" evidence="1">
    <location>
        <begin position="235"/>
        <end position="449"/>
    </location>
</feature>
<feature type="binding site" evidence="1">
    <location>
        <begin position="69"/>
        <end position="74"/>
    </location>
    <ligand>
        <name>FMN</name>
        <dbReference type="ChEBI" id="CHEBI:58210"/>
    </ligand>
</feature>
<feature type="binding site" evidence="1">
    <location>
        <begin position="116"/>
        <end position="119"/>
    </location>
    <ligand>
        <name>FMN</name>
        <dbReference type="ChEBI" id="CHEBI:58210"/>
    </ligand>
</feature>
<feature type="binding site" evidence="1">
    <location>
        <begin position="152"/>
        <end position="161"/>
    </location>
    <ligand>
        <name>FMN</name>
        <dbReference type="ChEBI" id="CHEBI:58210"/>
    </ligand>
</feature>
<feature type="binding site" evidence="1">
    <location>
        <position position="323"/>
    </location>
    <ligand>
        <name>FAD</name>
        <dbReference type="ChEBI" id="CHEBI:57692"/>
    </ligand>
</feature>
<feature type="binding site" evidence="1">
    <location>
        <position position="357"/>
    </location>
    <ligand>
        <name>FAD</name>
        <dbReference type="ChEBI" id="CHEBI:57692"/>
    </ligand>
</feature>
<feature type="binding site" evidence="1">
    <location>
        <begin position="387"/>
        <end position="390"/>
    </location>
    <ligand>
        <name>FAD</name>
        <dbReference type="ChEBI" id="CHEBI:57692"/>
    </ligand>
</feature>
<feature type="binding site" evidence="1">
    <location>
        <begin position="405"/>
        <end position="407"/>
    </location>
    <ligand>
        <name>FAD</name>
        <dbReference type="ChEBI" id="CHEBI:57692"/>
    </ligand>
</feature>
<feature type="binding site" evidence="1">
    <location>
        <position position="411"/>
    </location>
    <ligand>
        <name>FAD</name>
        <dbReference type="ChEBI" id="CHEBI:57692"/>
    </ligand>
</feature>
<feature type="binding site" evidence="1">
    <location>
        <begin position="420"/>
        <end position="423"/>
    </location>
    <ligand>
        <name>FAD</name>
        <dbReference type="ChEBI" id="CHEBI:57692"/>
    </ligand>
</feature>
<feature type="binding site" evidence="1">
    <location>
        <begin position="520"/>
        <end position="521"/>
    </location>
    <ligand>
        <name>NADP(+)</name>
        <dbReference type="ChEBI" id="CHEBI:58349"/>
    </ligand>
</feature>
<feature type="binding site" evidence="1">
    <location>
        <begin position="526"/>
        <end position="530"/>
    </location>
    <ligand>
        <name>NADP(+)</name>
        <dbReference type="ChEBI" id="CHEBI:58349"/>
    </ligand>
</feature>
<feature type="binding site" evidence="1">
    <location>
        <position position="562"/>
    </location>
    <ligand>
        <name>NADP(+)</name>
        <dbReference type="ChEBI" id="CHEBI:58349"/>
    </ligand>
</feature>
<feature type="binding site" evidence="1">
    <location>
        <position position="600"/>
    </location>
    <ligand>
        <name>FAD</name>
        <dbReference type="ChEBI" id="CHEBI:57692"/>
    </ligand>
</feature>
<protein>
    <recommendedName>
        <fullName evidence="1">Sulfite reductase [NADPH] flavoprotein alpha-component</fullName>
        <shortName evidence="1">SiR-FP</shortName>
        <ecNumber evidence="1">1.8.1.2</ecNumber>
    </recommendedName>
</protein>
<dbReference type="EC" id="1.8.1.2" evidence="1"/>
<dbReference type="EMBL" id="BX571861">
    <property type="protein sequence ID" value="CAE12998.1"/>
    <property type="molecule type" value="Genomic_DNA"/>
</dbReference>
<dbReference type="RefSeq" id="WP_011145079.1">
    <property type="nucleotide sequence ID" value="NC_005126.1"/>
</dbReference>
<dbReference type="SMR" id="Q7N8L6"/>
<dbReference type="STRING" id="243265.plu0703"/>
<dbReference type="GeneID" id="48846998"/>
<dbReference type="KEGG" id="plu:plu0703"/>
<dbReference type="eggNOG" id="COG0369">
    <property type="taxonomic scope" value="Bacteria"/>
</dbReference>
<dbReference type="HOGENOM" id="CLU_001570_17_7_6"/>
<dbReference type="OrthoDB" id="9816402at2"/>
<dbReference type="UniPathway" id="UPA00140">
    <property type="reaction ID" value="UER00207"/>
</dbReference>
<dbReference type="Proteomes" id="UP000002514">
    <property type="component" value="Chromosome"/>
</dbReference>
<dbReference type="GO" id="GO:0005829">
    <property type="term" value="C:cytosol"/>
    <property type="evidence" value="ECO:0007669"/>
    <property type="project" value="TreeGrafter"/>
</dbReference>
<dbReference type="GO" id="GO:0050660">
    <property type="term" value="F:flavin adenine dinucleotide binding"/>
    <property type="evidence" value="ECO:0007669"/>
    <property type="project" value="InterPro"/>
</dbReference>
<dbReference type="GO" id="GO:0010181">
    <property type="term" value="F:FMN binding"/>
    <property type="evidence" value="ECO:0007669"/>
    <property type="project" value="InterPro"/>
</dbReference>
<dbReference type="GO" id="GO:0004783">
    <property type="term" value="F:sulfite reductase (NADPH) activity"/>
    <property type="evidence" value="ECO:0007669"/>
    <property type="project" value="UniProtKB-UniRule"/>
</dbReference>
<dbReference type="GO" id="GO:0019344">
    <property type="term" value="P:cysteine biosynthetic process"/>
    <property type="evidence" value="ECO:0007669"/>
    <property type="project" value="UniProtKB-KW"/>
</dbReference>
<dbReference type="GO" id="GO:0070814">
    <property type="term" value="P:hydrogen sulfide biosynthetic process"/>
    <property type="evidence" value="ECO:0007669"/>
    <property type="project" value="UniProtKB-UniRule"/>
</dbReference>
<dbReference type="GO" id="GO:0000103">
    <property type="term" value="P:sulfate assimilation"/>
    <property type="evidence" value="ECO:0007669"/>
    <property type="project" value="UniProtKB-UniRule"/>
</dbReference>
<dbReference type="CDD" id="cd06199">
    <property type="entry name" value="SiR"/>
    <property type="match status" value="1"/>
</dbReference>
<dbReference type="FunFam" id="3.40.50.80:FF:000001">
    <property type="entry name" value="NADPH--cytochrome P450 reductase 1"/>
    <property type="match status" value="1"/>
</dbReference>
<dbReference type="FunFam" id="1.20.990.10:FF:000004">
    <property type="entry name" value="Sulfite reductase [NADPH] flavoprotein alpha-component"/>
    <property type="match status" value="1"/>
</dbReference>
<dbReference type="FunFam" id="3.40.50.360:FF:000018">
    <property type="entry name" value="Sulfite reductase [NADPH] flavoprotein alpha-component"/>
    <property type="match status" value="1"/>
</dbReference>
<dbReference type="Gene3D" id="3.40.50.360">
    <property type="match status" value="1"/>
</dbReference>
<dbReference type="Gene3D" id="1.20.990.10">
    <property type="entry name" value="NADPH-cytochrome p450 Reductase, Chain A, domain 3"/>
    <property type="match status" value="1"/>
</dbReference>
<dbReference type="Gene3D" id="3.40.50.80">
    <property type="entry name" value="Nucleotide-binding domain of ferredoxin-NADP reductase (FNR) module"/>
    <property type="match status" value="1"/>
</dbReference>
<dbReference type="Gene3D" id="2.40.30.10">
    <property type="entry name" value="Translation factors"/>
    <property type="match status" value="1"/>
</dbReference>
<dbReference type="HAMAP" id="MF_01541">
    <property type="entry name" value="CysJ"/>
    <property type="match status" value="1"/>
</dbReference>
<dbReference type="InterPro" id="IPR010199">
    <property type="entry name" value="CysJ"/>
</dbReference>
<dbReference type="InterPro" id="IPR003097">
    <property type="entry name" value="CysJ-like_FAD-binding"/>
</dbReference>
<dbReference type="InterPro" id="IPR029758">
    <property type="entry name" value="CysJ_Proteobact"/>
</dbReference>
<dbReference type="InterPro" id="IPR017927">
    <property type="entry name" value="FAD-bd_FR_type"/>
</dbReference>
<dbReference type="InterPro" id="IPR001094">
    <property type="entry name" value="Flavdoxin-like"/>
</dbReference>
<dbReference type="InterPro" id="IPR008254">
    <property type="entry name" value="Flavodoxin/NO_synth"/>
</dbReference>
<dbReference type="InterPro" id="IPR001709">
    <property type="entry name" value="Flavoprot_Pyr_Nucl_cyt_Rdtase"/>
</dbReference>
<dbReference type="InterPro" id="IPR029039">
    <property type="entry name" value="Flavoprotein-like_sf"/>
</dbReference>
<dbReference type="InterPro" id="IPR039261">
    <property type="entry name" value="FNR_nucleotide-bd"/>
</dbReference>
<dbReference type="InterPro" id="IPR023173">
    <property type="entry name" value="NADPH_Cyt_P450_Rdtase_alpha"/>
</dbReference>
<dbReference type="InterPro" id="IPR001433">
    <property type="entry name" value="OxRdtase_FAD/NAD-bd"/>
</dbReference>
<dbReference type="InterPro" id="IPR017938">
    <property type="entry name" value="Riboflavin_synthase-like_b-brl"/>
</dbReference>
<dbReference type="NCBIfam" id="TIGR01931">
    <property type="entry name" value="cysJ"/>
    <property type="match status" value="1"/>
</dbReference>
<dbReference type="NCBIfam" id="NF004859">
    <property type="entry name" value="PRK06214.1"/>
    <property type="match status" value="1"/>
</dbReference>
<dbReference type="NCBIfam" id="NF008197">
    <property type="entry name" value="PRK10953.1"/>
    <property type="match status" value="1"/>
</dbReference>
<dbReference type="PANTHER" id="PTHR19384:SF128">
    <property type="entry name" value="NADPH OXIDOREDUCTASE A"/>
    <property type="match status" value="1"/>
</dbReference>
<dbReference type="PANTHER" id="PTHR19384">
    <property type="entry name" value="NITRIC OXIDE SYNTHASE-RELATED"/>
    <property type="match status" value="1"/>
</dbReference>
<dbReference type="Pfam" id="PF00667">
    <property type="entry name" value="FAD_binding_1"/>
    <property type="match status" value="1"/>
</dbReference>
<dbReference type="Pfam" id="PF00258">
    <property type="entry name" value="Flavodoxin_1"/>
    <property type="match status" value="1"/>
</dbReference>
<dbReference type="Pfam" id="PF00175">
    <property type="entry name" value="NAD_binding_1"/>
    <property type="match status" value="1"/>
</dbReference>
<dbReference type="PIRSF" id="PIRSF000207">
    <property type="entry name" value="SiR-FP_CysJ"/>
    <property type="match status" value="1"/>
</dbReference>
<dbReference type="PRINTS" id="PR00369">
    <property type="entry name" value="FLAVODOXIN"/>
</dbReference>
<dbReference type="PRINTS" id="PR00371">
    <property type="entry name" value="FPNCR"/>
</dbReference>
<dbReference type="SUPFAM" id="SSF52343">
    <property type="entry name" value="Ferredoxin reductase-like, C-terminal NADP-linked domain"/>
    <property type="match status" value="1"/>
</dbReference>
<dbReference type="SUPFAM" id="SSF52218">
    <property type="entry name" value="Flavoproteins"/>
    <property type="match status" value="1"/>
</dbReference>
<dbReference type="SUPFAM" id="SSF63380">
    <property type="entry name" value="Riboflavin synthase domain-like"/>
    <property type="match status" value="1"/>
</dbReference>
<dbReference type="PROSITE" id="PS51384">
    <property type="entry name" value="FAD_FR"/>
    <property type="match status" value="1"/>
</dbReference>
<dbReference type="PROSITE" id="PS50902">
    <property type="entry name" value="FLAVODOXIN_LIKE"/>
    <property type="match status" value="1"/>
</dbReference>
<gene>
    <name evidence="1" type="primary">cysJ</name>
    <name type="ordered locus">plu0703</name>
</gene>